<name>KCY_METKA</name>
<dbReference type="EC" id="2.7.4.25" evidence="1"/>
<dbReference type="EMBL" id="AE009439">
    <property type="protein sequence ID" value="AAM01239.1"/>
    <property type="molecule type" value="Genomic_DNA"/>
</dbReference>
<dbReference type="RefSeq" id="WP_011018394.1">
    <property type="nucleotide sequence ID" value="NC_003551.1"/>
</dbReference>
<dbReference type="SMR" id="Q8TZB3"/>
<dbReference type="FunCoup" id="Q8TZB3">
    <property type="interactions" value="21"/>
</dbReference>
<dbReference type="STRING" id="190192.MK0022"/>
<dbReference type="PaxDb" id="190192-MK0022"/>
<dbReference type="EnsemblBacteria" id="AAM01239">
    <property type="protein sequence ID" value="AAM01239"/>
    <property type="gene ID" value="MK0022"/>
</dbReference>
<dbReference type="GeneID" id="1477324"/>
<dbReference type="KEGG" id="mka:MK0022"/>
<dbReference type="PATRIC" id="fig|190192.8.peg.22"/>
<dbReference type="HOGENOM" id="CLU_079959_1_0_2"/>
<dbReference type="InParanoid" id="Q8TZB3"/>
<dbReference type="OrthoDB" id="31096at2157"/>
<dbReference type="Proteomes" id="UP000001826">
    <property type="component" value="Chromosome"/>
</dbReference>
<dbReference type="GO" id="GO:0005737">
    <property type="term" value="C:cytoplasm"/>
    <property type="evidence" value="ECO:0007669"/>
    <property type="project" value="UniProtKB-SubCell"/>
</dbReference>
<dbReference type="GO" id="GO:0005524">
    <property type="term" value="F:ATP binding"/>
    <property type="evidence" value="ECO:0007669"/>
    <property type="project" value="UniProtKB-UniRule"/>
</dbReference>
<dbReference type="GO" id="GO:0036430">
    <property type="term" value="F:CMP kinase activity"/>
    <property type="evidence" value="ECO:0007669"/>
    <property type="project" value="RHEA"/>
</dbReference>
<dbReference type="GO" id="GO:0036431">
    <property type="term" value="F:dCMP kinase activity"/>
    <property type="evidence" value="ECO:0007669"/>
    <property type="project" value="RHEA"/>
</dbReference>
<dbReference type="GO" id="GO:0006220">
    <property type="term" value="P:pyrimidine nucleotide metabolic process"/>
    <property type="evidence" value="ECO:0007669"/>
    <property type="project" value="UniProtKB-UniRule"/>
</dbReference>
<dbReference type="CDD" id="cd02020">
    <property type="entry name" value="CMPK"/>
    <property type="match status" value="1"/>
</dbReference>
<dbReference type="Gene3D" id="3.40.50.300">
    <property type="entry name" value="P-loop containing nucleotide triphosphate hydrolases"/>
    <property type="match status" value="1"/>
</dbReference>
<dbReference type="HAMAP" id="MF_00239">
    <property type="entry name" value="Cytidyl_kinase_type2"/>
    <property type="match status" value="1"/>
</dbReference>
<dbReference type="InterPro" id="IPR011892">
    <property type="entry name" value="Cyt_kin_arch"/>
</dbReference>
<dbReference type="InterPro" id="IPR011994">
    <property type="entry name" value="Cytidylate_kinase_dom"/>
</dbReference>
<dbReference type="InterPro" id="IPR027417">
    <property type="entry name" value="P-loop_NTPase"/>
</dbReference>
<dbReference type="NCBIfam" id="TIGR02173">
    <property type="entry name" value="cyt_kin_arch"/>
    <property type="match status" value="1"/>
</dbReference>
<dbReference type="Pfam" id="PF13189">
    <property type="entry name" value="Cytidylate_kin2"/>
    <property type="match status" value="1"/>
</dbReference>
<dbReference type="SUPFAM" id="SSF52540">
    <property type="entry name" value="P-loop containing nucleoside triphosphate hydrolases"/>
    <property type="match status" value="1"/>
</dbReference>
<proteinExistence type="inferred from homology"/>
<comment type="catalytic activity">
    <reaction evidence="1">
        <text>CMP + ATP = CDP + ADP</text>
        <dbReference type="Rhea" id="RHEA:11600"/>
        <dbReference type="ChEBI" id="CHEBI:30616"/>
        <dbReference type="ChEBI" id="CHEBI:58069"/>
        <dbReference type="ChEBI" id="CHEBI:60377"/>
        <dbReference type="ChEBI" id="CHEBI:456216"/>
        <dbReference type="EC" id="2.7.4.25"/>
    </reaction>
</comment>
<comment type="catalytic activity">
    <reaction evidence="1">
        <text>dCMP + ATP = dCDP + ADP</text>
        <dbReference type="Rhea" id="RHEA:25094"/>
        <dbReference type="ChEBI" id="CHEBI:30616"/>
        <dbReference type="ChEBI" id="CHEBI:57566"/>
        <dbReference type="ChEBI" id="CHEBI:58593"/>
        <dbReference type="ChEBI" id="CHEBI:456216"/>
        <dbReference type="EC" id="2.7.4.25"/>
    </reaction>
</comment>
<comment type="subcellular location">
    <subcellularLocation>
        <location evidence="1">Cytoplasm</location>
    </subcellularLocation>
</comment>
<comment type="similarity">
    <text evidence="1">Belongs to the cytidylate kinase family. Type 2 subfamily.</text>
</comment>
<sequence length="193" mass="21886">MFSISVVITIGGLPGSGTTTMARRLAEHYGLKHVYAGKIFREMAEERGMDLEEFSKVAEDNPDIDLEIDRRQREAAEEGDVILEGRLAAFVAAGELDHVKGPDLATLKIWLKAPLEVRAERVAKREGIDVEEARRRIQEREKSELKRYKEIYGVDPTDLSLYDLVLDTSRWSEDETFSILKAAIDPLLEREDP</sequence>
<feature type="chain" id="PRO_0000132014" description="Cytidylate kinase">
    <location>
        <begin position="1"/>
        <end position="193"/>
    </location>
</feature>
<feature type="binding site" evidence="1">
    <location>
        <begin position="12"/>
        <end position="20"/>
    </location>
    <ligand>
        <name>ATP</name>
        <dbReference type="ChEBI" id="CHEBI:30616"/>
    </ligand>
</feature>
<organism>
    <name type="scientific">Methanopyrus kandleri (strain AV19 / DSM 6324 / JCM 9639 / NBRC 100938)</name>
    <dbReference type="NCBI Taxonomy" id="190192"/>
    <lineage>
        <taxon>Archaea</taxon>
        <taxon>Methanobacteriati</taxon>
        <taxon>Methanobacteriota</taxon>
        <taxon>Methanomada group</taxon>
        <taxon>Methanopyri</taxon>
        <taxon>Methanopyrales</taxon>
        <taxon>Methanopyraceae</taxon>
        <taxon>Methanopyrus</taxon>
    </lineage>
</organism>
<keyword id="KW-0067">ATP-binding</keyword>
<keyword id="KW-0963">Cytoplasm</keyword>
<keyword id="KW-0418">Kinase</keyword>
<keyword id="KW-0547">Nucleotide-binding</keyword>
<keyword id="KW-1185">Reference proteome</keyword>
<keyword id="KW-0808">Transferase</keyword>
<protein>
    <recommendedName>
        <fullName evidence="1">Cytidylate kinase</fullName>
        <shortName evidence="1">CK</shortName>
        <ecNumber evidence="1">2.7.4.25</ecNumber>
    </recommendedName>
    <alternativeName>
        <fullName evidence="1">Cytidine monophosphate kinase</fullName>
        <shortName evidence="1">CMP kinase</shortName>
    </alternativeName>
</protein>
<accession>Q8TZB3</accession>
<gene>
    <name evidence="1" type="primary">cmk</name>
    <name type="ordered locus">MK0022</name>
</gene>
<reference key="1">
    <citation type="journal article" date="2002" name="Proc. Natl. Acad. Sci. U.S.A.">
        <title>The complete genome of hyperthermophile Methanopyrus kandleri AV19 and monophyly of archaeal methanogens.</title>
        <authorList>
            <person name="Slesarev A.I."/>
            <person name="Mezhevaya K.V."/>
            <person name="Makarova K.S."/>
            <person name="Polushin N.N."/>
            <person name="Shcherbinina O.V."/>
            <person name="Shakhova V.V."/>
            <person name="Belova G.I."/>
            <person name="Aravind L."/>
            <person name="Natale D.A."/>
            <person name="Rogozin I.B."/>
            <person name="Tatusov R.L."/>
            <person name="Wolf Y.I."/>
            <person name="Stetter K.O."/>
            <person name="Malykh A.G."/>
            <person name="Koonin E.V."/>
            <person name="Kozyavkin S.A."/>
        </authorList>
    </citation>
    <scope>NUCLEOTIDE SEQUENCE [LARGE SCALE GENOMIC DNA]</scope>
    <source>
        <strain>AV19 / DSM 6324 / JCM 9639 / NBRC 100938</strain>
    </source>
</reference>
<evidence type="ECO:0000255" key="1">
    <source>
        <dbReference type="HAMAP-Rule" id="MF_00239"/>
    </source>
</evidence>